<proteinExistence type="evidence at protein level"/>
<keyword id="KW-0002">3D-structure</keyword>
<keyword id="KW-1015">Disulfide bond</keyword>
<keyword id="KW-0393">Immunoglobulin domain</keyword>
<keyword id="KW-1185">Reference proteome</keyword>
<keyword id="KW-0677">Repeat</keyword>
<keyword id="KW-0964">Secreted</keyword>
<keyword id="KW-0732">Signal</keyword>
<protein>
    <recommendedName>
        <fullName evidence="6">Zwei Ig domain protein zig-4</fullName>
    </recommendedName>
    <alternativeName>
        <fullName evidence="6">2 Ig domain protein zig-4</fullName>
    </alternativeName>
</protein>
<dbReference type="EMBL" id="AF456251">
    <property type="protein sequence ID" value="AAL59609.1"/>
    <property type="molecule type" value="mRNA"/>
</dbReference>
<dbReference type="EMBL" id="BX284606">
    <property type="protein sequence ID" value="CCD63842.1"/>
    <property type="molecule type" value="Genomic_DNA"/>
</dbReference>
<dbReference type="PIR" id="T15475">
    <property type="entry name" value="T15475"/>
</dbReference>
<dbReference type="RefSeq" id="NP_509335.1">
    <property type="nucleotide sequence ID" value="NM_076934.7"/>
</dbReference>
<dbReference type="PDB" id="8TK9">
    <property type="method" value="X-ray"/>
    <property type="resolution" value="1.30 A"/>
    <property type="chains" value="A=42-248"/>
</dbReference>
<dbReference type="PDB" id="8TKT">
    <property type="method" value="X-ray"/>
    <property type="resolution" value="2.30 A"/>
    <property type="chains" value="A/C=42-248"/>
</dbReference>
<dbReference type="PDB" id="8TKU">
    <property type="method" value="X-ray"/>
    <property type="resolution" value="2.35 A"/>
    <property type="chains" value="A/C/E/G=42-248"/>
</dbReference>
<dbReference type="PDBsum" id="8TK9"/>
<dbReference type="PDBsum" id="8TKT"/>
<dbReference type="PDBsum" id="8TKU"/>
<dbReference type="SMR" id="G5ECB1"/>
<dbReference type="FunCoup" id="G5ECB1">
    <property type="interactions" value="741"/>
</dbReference>
<dbReference type="STRING" id="6239.C09C7.1.1"/>
<dbReference type="PaxDb" id="6239-C09C7.1"/>
<dbReference type="PeptideAtlas" id="G5ECB1"/>
<dbReference type="EnsemblMetazoa" id="C09C7.1.1">
    <property type="protein sequence ID" value="C09C7.1.1"/>
    <property type="gene ID" value="WBGene00006981"/>
</dbReference>
<dbReference type="GeneID" id="181051"/>
<dbReference type="KEGG" id="cel:CELE_C09C7.1"/>
<dbReference type="AGR" id="WB:WBGene00006981"/>
<dbReference type="CTD" id="181051"/>
<dbReference type="WormBase" id="C09C7.1">
    <property type="protein sequence ID" value="CE02468"/>
    <property type="gene ID" value="WBGene00006981"/>
    <property type="gene designation" value="zig-4"/>
</dbReference>
<dbReference type="eggNOG" id="KOG3510">
    <property type="taxonomic scope" value="Eukaryota"/>
</dbReference>
<dbReference type="GeneTree" id="ENSGT00970000196086"/>
<dbReference type="HOGENOM" id="CLU_072416_1_0_1"/>
<dbReference type="InParanoid" id="G5ECB1"/>
<dbReference type="OMA" id="DEYSTHF"/>
<dbReference type="OrthoDB" id="6138780at2759"/>
<dbReference type="PhylomeDB" id="G5ECB1"/>
<dbReference type="PRO" id="PR:G5ECB1"/>
<dbReference type="Proteomes" id="UP000001940">
    <property type="component" value="Chromosome X"/>
</dbReference>
<dbReference type="Bgee" id="WBGene00006981">
    <property type="expression patterns" value="Expressed in pharyngeal muscle cell (C elegans) and 3 other cell types or tissues"/>
</dbReference>
<dbReference type="GO" id="GO:0005576">
    <property type="term" value="C:extracellular region"/>
    <property type="evidence" value="ECO:0007669"/>
    <property type="project" value="UniProtKB-SubCell"/>
</dbReference>
<dbReference type="GO" id="GO:0048666">
    <property type="term" value="P:neuron development"/>
    <property type="evidence" value="ECO:0000315"/>
    <property type="project" value="WormBase"/>
</dbReference>
<dbReference type="CDD" id="cd00096">
    <property type="entry name" value="Ig"/>
    <property type="match status" value="1"/>
</dbReference>
<dbReference type="FunFam" id="2.60.40.10:FF:001749">
    <property type="entry name" value="Neural/ectodermal development factor IMP-L2"/>
    <property type="match status" value="1"/>
</dbReference>
<dbReference type="FunFam" id="2.60.40.10:FF:002402">
    <property type="entry name" value="Zwei Ig domain protein zig-4"/>
    <property type="match status" value="1"/>
</dbReference>
<dbReference type="Gene3D" id="2.60.40.10">
    <property type="entry name" value="Immunoglobulins"/>
    <property type="match status" value="2"/>
</dbReference>
<dbReference type="InterPro" id="IPR007110">
    <property type="entry name" value="Ig-like_dom"/>
</dbReference>
<dbReference type="InterPro" id="IPR036179">
    <property type="entry name" value="Ig-like_dom_sf"/>
</dbReference>
<dbReference type="InterPro" id="IPR013783">
    <property type="entry name" value="Ig-like_fold"/>
</dbReference>
<dbReference type="InterPro" id="IPR013098">
    <property type="entry name" value="Ig_I-set"/>
</dbReference>
<dbReference type="InterPro" id="IPR003599">
    <property type="entry name" value="Ig_sub"/>
</dbReference>
<dbReference type="InterPro" id="IPR003598">
    <property type="entry name" value="Ig_sub2"/>
</dbReference>
<dbReference type="InterPro" id="IPR051170">
    <property type="entry name" value="Neural/epithelial_adhesion"/>
</dbReference>
<dbReference type="PANTHER" id="PTHR12231">
    <property type="entry name" value="CTX-RELATED TYPE I TRANSMEMBRANE PROTEIN"/>
    <property type="match status" value="1"/>
</dbReference>
<dbReference type="PANTHER" id="PTHR12231:SF253">
    <property type="entry name" value="DPR-INTERACTING PROTEIN ETA, ISOFORM B-RELATED"/>
    <property type="match status" value="1"/>
</dbReference>
<dbReference type="Pfam" id="PF07679">
    <property type="entry name" value="I-set"/>
    <property type="match status" value="1"/>
</dbReference>
<dbReference type="Pfam" id="PF13927">
    <property type="entry name" value="Ig_3"/>
    <property type="match status" value="1"/>
</dbReference>
<dbReference type="SMART" id="SM00409">
    <property type="entry name" value="IG"/>
    <property type="match status" value="2"/>
</dbReference>
<dbReference type="SMART" id="SM00408">
    <property type="entry name" value="IGc2"/>
    <property type="match status" value="2"/>
</dbReference>
<dbReference type="SUPFAM" id="SSF48726">
    <property type="entry name" value="Immunoglobulin"/>
    <property type="match status" value="2"/>
</dbReference>
<dbReference type="PROSITE" id="PS50835">
    <property type="entry name" value="IG_LIKE"/>
    <property type="match status" value="2"/>
</dbReference>
<feature type="signal peptide" evidence="1">
    <location>
        <begin position="1"/>
        <end position="16"/>
    </location>
</feature>
<feature type="chain" id="PRO_5007661405" description="Zwei Ig domain protein zig-4">
    <location>
        <begin position="17"/>
        <end position="253"/>
    </location>
</feature>
<feature type="domain" description="Ig-like C2-type 1" evidence="2">
    <location>
        <begin position="43"/>
        <end position="146"/>
    </location>
</feature>
<feature type="domain" description="Ig-like C2-type 2" evidence="2">
    <location>
        <begin position="162"/>
        <end position="245"/>
    </location>
</feature>
<feature type="disulfide bond" evidence="2">
    <location>
        <begin position="67"/>
        <end position="130"/>
    </location>
</feature>
<feature type="disulfide bond" evidence="2">
    <location>
        <begin position="183"/>
        <end position="229"/>
    </location>
</feature>
<feature type="strand" evidence="11">
    <location>
        <begin position="45"/>
        <end position="50"/>
    </location>
</feature>
<feature type="strand" evidence="11">
    <location>
        <begin position="55"/>
        <end position="58"/>
    </location>
</feature>
<feature type="strand" evidence="11">
    <location>
        <begin position="63"/>
        <end position="73"/>
    </location>
</feature>
<feature type="strand" evidence="11">
    <location>
        <begin position="76"/>
        <end position="81"/>
    </location>
</feature>
<feature type="strand" evidence="11">
    <location>
        <begin position="84"/>
        <end position="87"/>
    </location>
</feature>
<feature type="helix" evidence="11">
    <location>
        <begin position="94"/>
        <end position="99"/>
    </location>
</feature>
<feature type="turn" evidence="11">
    <location>
        <begin position="100"/>
        <end position="102"/>
    </location>
</feature>
<feature type="strand" evidence="11">
    <location>
        <begin position="108"/>
        <end position="119"/>
    </location>
</feature>
<feature type="helix" evidence="11">
    <location>
        <begin position="122"/>
        <end position="124"/>
    </location>
</feature>
<feature type="strand" evidence="11">
    <location>
        <begin position="126"/>
        <end position="133"/>
    </location>
</feature>
<feature type="strand" evidence="11">
    <location>
        <begin position="138"/>
        <end position="148"/>
    </location>
</feature>
<feature type="strand" evidence="11">
    <location>
        <begin position="164"/>
        <end position="174"/>
    </location>
</feature>
<feature type="strand" evidence="11">
    <location>
        <begin position="179"/>
        <end position="187"/>
    </location>
</feature>
<feature type="strand" evidence="11">
    <location>
        <begin position="190"/>
        <end position="195"/>
    </location>
</feature>
<feature type="strand" evidence="11">
    <location>
        <begin position="203"/>
        <end position="208"/>
    </location>
</feature>
<feature type="strand" evidence="11">
    <location>
        <begin position="212"/>
        <end position="216"/>
    </location>
</feature>
<feature type="helix" evidence="11">
    <location>
        <begin position="221"/>
        <end position="223"/>
    </location>
</feature>
<feature type="strand" evidence="11">
    <location>
        <begin position="225"/>
        <end position="233"/>
    </location>
</feature>
<feature type="strand" evidence="11">
    <location>
        <begin position="236"/>
        <end position="247"/>
    </location>
</feature>
<evidence type="ECO:0000255" key="1"/>
<evidence type="ECO:0000255" key="2">
    <source>
        <dbReference type="PROSITE-ProRule" id="PRU00114"/>
    </source>
</evidence>
<evidence type="ECO:0000269" key="3">
    <source>
    </source>
</evidence>
<evidence type="ECO:0000269" key="4">
    <source>
    </source>
</evidence>
<evidence type="ECO:0000269" key="5">
    <source>
    </source>
</evidence>
<evidence type="ECO:0000303" key="6">
    <source>
    </source>
</evidence>
<evidence type="ECO:0000305" key="7"/>
<evidence type="ECO:0000312" key="8">
    <source>
        <dbReference type="EMBL" id="AAL59609.1"/>
    </source>
</evidence>
<evidence type="ECO:0000312" key="9">
    <source>
        <dbReference type="Proteomes" id="UP000001940"/>
    </source>
</evidence>
<evidence type="ECO:0000312" key="10">
    <source>
        <dbReference type="WormBase" id="C09C7.1"/>
    </source>
</evidence>
<evidence type="ECO:0007829" key="11">
    <source>
        <dbReference type="PDB" id="8TK9"/>
    </source>
</evidence>
<reference evidence="8" key="1">
    <citation type="journal article" date="2002" name="Science">
        <title>Immunoglobulin-domain proteins required for maintenance of ventral nerve cord organization.</title>
        <authorList>
            <person name="Aurelio O."/>
            <person name="Hall D."/>
            <person name="Hobert O."/>
        </authorList>
    </citation>
    <scope>NUCLEOTIDE SEQUENCE [MRNA]</scope>
    <scope>FUNCTION</scope>
    <scope>TISSUE SPECIFICITY</scope>
    <scope>DEVELOPMENTAL STAGE</scope>
    <scope>DISRUPTION PHENOTYPE</scope>
</reference>
<reference evidence="9" key="2">
    <citation type="journal article" date="1998" name="Science">
        <title>Genome sequence of the nematode C. elegans: a platform for investigating biology.</title>
        <authorList>
            <consortium name="The C. elegans sequencing consortium"/>
        </authorList>
    </citation>
    <scope>NUCLEOTIDE SEQUENCE [LARGE SCALE GENOMIC DNA]</scope>
    <source>
        <strain evidence="9">Bristol N2</strain>
    </source>
</reference>
<reference evidence="7" key="3">
    <citation type="journal article" date="2009" name="Genetics">
        <title>The small, secreted immunoglobulin protein ZIG-3 maintains axon position in Caenorhabditis elegans.</title>
        <authorList>
            <person name="Benard C."/>
            <person name="Tjoe N."/>
            <person name="Boulin T."/>
            <person name="Recio J."/>
            <person name="Hobert O."/>
        </authorList>
    </citation>
    <scope>FUNCTION</scope>
    <scope>DISRUPTION PHENOTYPE</scope>
</reference>
<reference evidence="7" key="4">
    <citation type="journal article" date="2012" name="PLoS Genet.">
        <title>The secreted immunoglobulin domain proteins ZIG-5 and ZIG-8 cooperate with L1CAM/SAX-7 to maintain nervous system integrity.</title>
        <authorList>
            <person name="Benard C.Y."/>
            <person name="Blanchette C."/>
            <person name="Recio J."/>
            <person name="Hobert O."/>
        </authorList>
    </citation>
    <scope>FUNCTION</scope>
    <scope>DISRUPTION PHENOTYPE</scope>
</reference>
<organism evidence="9">
    <name type="scientific">Caenorhabditis elegans</name>
    <dbReference type="NCBI Taxonomy" id="6239"/>
    <lineage>
        <taxon>Eukaryota</taxon>
        <taxon>Metazoa</taxon>
        <taxon>Ecdysozoa</taxon>
        <taxon>Nematoda</taxon>
        <taxon>Chromadorea</taxon>
        <taxon>Rhabditida</taxon>
        <taxon>Rhabditina</taxon>
        <taxon>Rhabditomorpha</taxon>
        <taxon>Rhabditoidea</taxon>
        <taxon>Rhabditidae</taxon>
        <taxon>Peloderinae</taxon>
        <taxon>Caenorhabditis</taxon>
    </lineage>
</organism>
<comment type="function">
    <text evidence="3 4">Required for maintaining axon position of PVQ and PVP neurons postembryonically in the ventral nerve cord (VNC) by preventing axons drifting into the opposite side of the VNC that could occur during body growth and movement.</text>
</comment>
<comment type="subcellular location">
    <subcellularLocation>
        <location evidence="1">Secreted</location>
    </subcellularLocation>
</comment>
<comment type="tissue specificity">
    <text evidence="3">Expressed in PVT, ASK, BAG, M2 and ASI neurons. In L1 larvae, expressed in pharyngeal ectoderm and mesoderm.</text>
</comment>
<comment type="developmental stage">
    <text evidence="3">Expression begins at the late L1 larval stage.</text>
</comment>
<comment type="disruption phenotype">
    <text evidence="3 4 5">At the L1 larval stage, display defects in the positioning of the ventral nerve cord (VNC) axons characterized by axons of embryonically generated PVQ and PVP neurons, but not of RMEV, HSN and AVK neurons, from the left and right VNC drifting into the opposite cord (axon flip-over) (PubMed:11809975, PubMed:19737747). These defects are not enhanced in a zig-3 (tm924) mutant background or in zig-3 (tm924) dig-1 (ky188), zig-3 (tm924) sax-7 (nj48) or zig-3 (tm924) egl-15 (n484) mutant background (PubMed:19737747). In a zig-1, zig-2, zig-3 or zig-5 or zig-8 mutant background, cell body positioning of ASI and ASH head neurons is normal (PubMed:22829780).</text>
</comment>
<accession>G5ECB1</accession>
<sequence>MFAIALLSFLVVLINAHPPMHAEMHSAVVTLANEIDTNYLTSPAKIKIVAPLESALIPGGETYQLRCDIMSTPAATIHWKFNGKLIQGSNELNVEEKLLNFGKAIVDTGIVASILTIQCPSAENSGTYSCVGYNGHQTIETVAEVEIEGEASGCRSNHKSAPEIVFWTDSRFEMTGNVATLVCRANQQVDWVWMSNDELVKNNDKFTVLSNGDLVIKNIVWDDMGTYTCIARNQFGEARQETFLYPTAKKSSF</sequence>
<gene>
    <name evidence="10" type="primary">zig-4</name>
    <name evidence="10" type="ORF">C09C7.1</name>
</gene>
<name>ZIG4_CAEEL</name>